<name>YOR24_YEAST</name>
<organism>
    <name type="scientific">Saccharomyces cerevisiae (strain ATCC 204508 / S288c)</name>
    <name type="common">Baker's yeast</name>
    <dbReference type="NCBI Taxonomy" id="559292"/>
    <lineage>
        <taxon>Eukaryota</taxon>
        <taxon>Fungi</taxon>
        <taxon>Dikarya</taxon>
        <taxon>Ascomycota</taxon>
        <taxon>Saccharomycotina</taxon>
        <taxon>Saccharomycetes</taxon>
        <taxon>Saccharomycetales</taxon>
        <taxon>Saccharomycetaceae</taxon>
        <taxon>Saccharomyces</taxon>
    </lineage>
</organism>
<accession>Q12070</accession>
<feature type="signal peptide" evidence="1">
    <location>
        <begin position="1"/>
        <end position="34"/>
    </location>
</feature>
<feature type="chain" id="PRO_0000299703" description="Putative uncharacterized protein YOR024W">
    <location>
        <begin position="35"/>
        <end position="107"/>
    </location>
</feature>
<dbReference type="EMBL" id="X87331">
    <property type="protein sequence ID" value="CAA60773.1"/>
    <property type="molecule type" value="Genomic_DNA"/>
</dbReference>
<dbReference type="EMBL" id="Z74932">
    <property type="protein sequence ID" value="CAA99214.1"/>
    <property type="molecule type" value="Genomic_DNA"/>
</dbReference>
<dbReference type="PIR" id="S54630">
    <property type="entry name" value="S54630"/>
</dbReference>
<dbReference type="STRING" id="4932.YOR024W"/>
<dbReference type="PaxDb" id="4932-YOR024W"/>
<dbReference type="EnsemblFungi" id="YOR024W_mRNA">
    <property type="protein sequence ID" value="YOR024W"/>
    <property type="gene ID" value="YOR024W"/>
</dbReference>
<dbReference type="AGR" id="SGD:S000005550"/>
<dbReference type="SGD" id="S000005550">
    <property type="gene designation" value="YOR024W"/>
</dbReference>
<dbReference type="HOGENOM" id="CLU_2212035_0_0_1"/>
<evidence type="ECO:0000255" key="1"/>
<evidence type="ECO:0000305" key="2">
    <source>
    </source>
</evidence>
<protein>
    <recommendedName>
        <fullName>Putative uncharacterized protein YOR024W</fullName>
    </recommendedName>
</protein>
<reference key="1">
    <citation type="journal article" date="1997" name="Nature">
        <title>The nucleotide sequence of Saccharomyces cerevisiae chromosome XV.</title>
        <authorList>
            <person name="Dujon B."/>
            <person name="Albermann K."/>
            <person name="Aldea M."/>
            <person name="Alexandraki D."/>
            <person name="Ansorge W."/>
            <person name="Arino J."/>
            <person name="Benes V."/>
            <person name="Bohn C."/>
            <person name="Bolotin-Fukuhara M."/>
            <person name="Bordonne R."/>
            <person name="Boyer J."/>
            <person name="Camasses A."/>
            <person name="Casamayor A."/>
            <person name="Casas C."/>
            <person name="Cheret G."/>
            <person name="Cziepluch C."/>
            <person name="Daignan-Fornier B."/>
            <person name="Dang V.-D."/>
            <person name="de Haan M."/>
            <person name="Delius H."/>
            <person name="Durand P."/>
            <person name="Fairhead C."/>
            <person name="Feldmann H."/>
            <person name="Gaillon L."/>
            <person name="Galisson F."/>
            <person name="Gamo F.-J."/>
            <person name="Gancedo C."/>
            <person name="Goffeau A."/>
            <person name="Goulding S.E."/>
            <person name="Grivell L.A."/>
            <person name="Habbig B."/>
            <person name="Hand N.J."/>
            <person name="Hani J."/>
            <person name="Hattenhorst U."/>
            <person name="Hebling U."/>
            <person name="Hernando Y."/>
            <person name="Herrero E."/>
            <person name="Heumann K."/>
            <person name="Hiesel R."/>
            <person name="Hilger F."/>
            <person name="Hofmann B."/>
            <person name="Hollenberg C.P."/>
            <person name="Hughes B."/>
            <person name="Jauniaux J.-C."/>
            <person name="Kalogeropoulos A."/>
            <person name="Katsoulou C."/>
            <person name="Kordes E."/>
            <person name="Lafuente M.J."/>
            <person name="Landt O."/>
            <person name="Louis E.J."/>
            <person name="Maarse A.C."/>
            <person name="Madania A."/>
            <person name="Mannhaupt G."/>
            <person name="Marck C."/>
            <person name="Martin R.P."/>
            <person name="Mewes H.-W."/>
            <person name="Michaux G."/>
            <person name="Paces V."/>
            <person name="Parle-McDermott A.G."/>
            <person name="Pearson B.M."/>
            <person name="Perrin A."/>
            <person name="Pettersson B."/>
            <person name="Poch O."/>
            <person name="Pohl T.M."/>
            <person name="Poirey R."/>
            <person name="Portetelle D."/>
            <person name="Pujol A."/>
            <person name="Purnelle B."/>
            <person name="Ramezani Rad M."/>
            <person name="Rechmann S."/>
            <person name="Schwager C."/>
            <person name="Schweizer M."/>
            <person name="Sor F."/>
            <person name="Sterky F."/>
            <person name="Tarassov I.A."/>
            <person name="Teodoru C."/>
            <person name="Tettelin H."/>
            <person name="Thierry A."/>
            <person name="Tobiasch E."/>
            <person name="Tzermia M."/>
            <person name="Uhlen M."/>
            <person name="Unseld M."/>
            <person name="Valens M."/>
            <person name="Vandenbol M."/>
            <person name="Vetter I."/>
            <person name="Vlcek C."/>
            <person name="Voet M."/>
            <person name="Volckaert G."/>
            <person name="Voss H."/>
            <person name="Wambutt R."/>
            <person name="Wedler H."/>
            <person name="Wiemann S."/>
            <person name="Winsor B."/>
            <person name="Wolfe K.H."/>
            <person name="Zollner A."/>
            <person name="Zumstein E."/>
            <person name="Kleine K."/>
        </authorList>
    </citation>
    <scope>NUCLEOTIDE SEQUENCE [LARGE SCALE GENOMIC DNA]</scope>
    <source>
        <strain>ATCC 204508 / S288c</strain>
    </source>
</reference>
<reference key="2">
    <citation type="journal article" date="2014" name="G3 (Bethesda)">
        <title>The reference genome sequence of Saccharomyces cerevisiae: Then and now.</title>
        <authorList>
            <person name="Engel S.R."/>
            <person name="Dietrich F.S."/>
            <person name="Fisk D.G."/>
            <person name="Binkley G."/>
            <person name="Balakrishnan R."/>
            <person name="Costanzo M.C."/>
            <person name="Dwight S.S."/>
            <person name="Hitz B.C."/>
            <person name="Karra K."/>
            <person name="Nash R.S."/>
            <person name="Weng S."/>
            <person name="Wong E.D."/>
            <person name="Lloyd P."/>
            <person name="Skrzypek M.S."/>
            <person name="Miyasato S.R."/>
            <person name="Simison M."/>
            <person name="Cherry J.M."/>
        </authorList>
    </citation>
    <scope>GENOME REANNOTATION</scope>
    <source>
        <strain>ATCC 204508 / S288c</strain>
    </source>
</reference>
<comment type="caution">
    <text evidence="2">Product of a dubious gene prediction unlikely to encode a functional protein. Because of that it is not part of the S.cerevisiae S288c complete/reference proteome set.</text>
</comment>
<gene>
    <name type="ordered locus">YOR024W</name>
    <name type="ORF">O2648</name>
    <name type="ORF">OR26.14</name>
    <name type="ORF">YOL303.9</name>
</gene>
<sequence>MRLQWPKFITFLSTGSCCLLFLLLPCSFFPLPTAMHSGKCTACVSVAGIPQLRVTISNSTSRTTFMFAVTTKGKTSIKASNVIRARELYLAYVLYITQARANTWLVV</sequence>
<keyword id="KW-0732">Signal</keyword>
<proteinExistence type="uncertain"/>